<keyword id="KW-0320">Glycogen biosynthesis</keyword>
<keyword id="KW-0328">Glycosyltransferase</keyword>
<keyword id="KW-1185">Reference proteome</keyword>
<keyword id="KW-0808">Transferase</keyword>
<dbReference type="EC" id="2.4.1.21" evidence="1"/>
<dbReference type="EMBL" id="CP000822">
    <property type="protein sequence ID" value="ABV15893.1"/>
    <property type="molecule type" value="Genomic_DNA"/>
</dbReference>
<dbReference type="RefSeq" id="WP_012135534.1">
    <property type="nucleotide sequence ID" value="NC_009792.1"/>
</dbReference>
<dbReference type="SMR" id="A8AQY0"/>
<dbReference type="STRING" id="290338.CKO_04848"/>
<dbReference type="CAZy" id="GT5">
    <property type="family name" value="Glycosyltransferase Family 5"/>
</dbReference>
<dbReference type="GeneID" id="45138345"/>
<dbReference type="KEGG" id="cko:CKO_04848"/>
<dbReference type="HOGENOM" id="CLU_009583_18_4_6"/>
<dbReference type="OrthoDB" id="9808590at2"/>
<dbReference type="UniPathway" id="UPA00164"/>
<dbReference type="Proteomes" id="UP000008148">
    <property type="component" value="Chromosome"/>
</dbReference>
<dbReference type="GO" id="GO:0005829">
    <property type="term" value="C:cytosol"/>
    <property type="evidence" value="ECO:0007669"/>
    <property type="project" value="TreeGrafter"/>
</dbReference>
<dbReference type="GO" id="GO:0009011">
    <property type="term" value="F:alpha-1,4-glucan glucosyltransferase (ADP-glucose donor) activity"/>
    <property type="evidence" value="ECO:0007669"/>
    <property type="project" value="UniProtKB-UniRule"/>
</dbReference>
<dbReference type="GO" id="GO:0004373">
    <property type="term" value="F:alpha-1,4-glucan glucosyltransferase (UDP-glucose donor) activity"/>
    <property type="evidence" value="ECO:0007669"/>
    <property type="project" value="InterPro"/>
</dbReference>
<dbReference type="GO" id="GO:0005978">
    <property type="term" value="P:glycogen biosynthetic process"/>
    <property type="evidence" value="ECO:0007669"/>
    <property type="project" value="UniProtKB-UniRule"/>
</dbReference>
<dbReference type="CDD" id="cd03791">
    <property type="entry name" value="GT5_Glycogen_synthase_DULL1-like"/>
    <property type="match status" value="1"/>
</dbReference>
<dbReference type="FunFam" id="3.40.50.2000:FF:000008">
    <property type="entry name" value="Glycogen synthase"/>
    <property type="match status" value="1"/>
</dbReference>
<dbReference type="FunFam" id="3.40.50.2000:FF:000011">
    <property type="entry name" value="Glycogen synthase"/>
    <property type="match status" value="1"/>
</dbReference>
<dbReference type="Gene3D" id="3.40.50.2000">
    <property type="entry name" value="Glycogen Phosphorylase B"/>
    <property type="match status" value="2"/>
</dbReference>
<dbReference type="HAMAP" id="MF_00484">
    <property type="entry name" value="Glycogen_synth"/>
    <property type="match status" value="1"/>
</dbReference>
<dbReference type="InterPro" id="IPR001296">
    <property type="entry name" value="Glyco_trans_1"/>
</dbReference>
<dbReference type="InterPro" id="IPR011835">
    <property type="entry name" value="GS/SS"/>
</dbReference>
<dbReference type="InterPro" id="IPR013534">
    <property type="entry name" value="Starch_synth_cat_dom"/>
</dbReference>
<dbReference type="NCBIfam" id="TIGR02095">
    <property type="entry name" value="glgA"/>
    <property type="match status" value="1"/>
</dbReference>
<dbReference type="NCBIfam" id="NF001899">
    <property type="entry name" value="PRK00654.1-2"/>
    <property type="match status" value="1"/>
</dbReference>
<dbReference type="PANTHER" id="PTHR45825:SF11">
    <property type="entry name" value="ALPHA AMYLASE DOMAIN-CONTAINING PROTEIN"/>
    <property type="match status" value="1"/>
</dbReference>
<dbReference type="PANTHER" id="PTHR45825">
    <property type="entry name" value="GRANULE-BOUND STARCH SYNTHASE 1, CHLOROPLASTIC/AMYLOPLASTIC"/>
    <property type="match status" value="1"/>
</dbReference>
<dbReference type="Pfam" id="PF08323">
    <property type="entry name" value="Glyco_transf_5"/>
    <property type="match status" value="1"/>
</dbReference>
<dbReference type="Pfam" id="PF00534">
    <property type="entry name" value="Glycos_transf_1"/>
    <property type="match status" value="1"/>
</dbReference>
<dbReference type="SUPFAM" id="SSF53756">
    <property type="entry name" value="UDP-Glycosyltransferase/glycogen phosphorylase"/>
    <property type="match status" value="1"/>
</dbReference>
<sequence length="477" mass="52877">MQVLHVCSEMFPLLKTGGLADVIGALPAAQIADGVDARVLLPAFPDIRRGIPDAQVVTRRDTFAGRITLLFGHYNGVGIYLIDAPHLYDRPGSPYHDTNLFAYTDNVLRFALLGWVGCEMACGLDPFWRPDVVHAHDWHAGLAPAYLAARGRPAKSVFTVHNLAYQGMFYAHHMDDIQLPWSFYNMHGLEFNGQISFLKAGLYYADHITAVSPTYAREITEPQFAYGMEGLLRQRHQEGRLSGVLNGVDEKIWSPETDLLLAARYTRDSLEEKAENKRQLQIAMGLKVDDKAPLFAVVSRLTSQKGLDLVLEALPGLLEQGGQLALLGAGDPVLQEGFLAAAAEHPGQVGVQIGYHEAFSHRIMGGADVILVPSRFEPCGLTQLYGLKYGTLPLVRRTGGLADTVSDSSLENLADGIASGFVFEDSNAWSLLRAIRRAFVLWSRPSLWRFVQRQAMAMDFSWQVAAKSYRELYYRLK</sequence>
<name>GLGA_CITK8</name>
<protein>
    <recommendedName>
        <fullName evidence="1">Glycogen synthase</fullName>
        <ecNumber evidence="1">2.4.1.21</ecNumber>
    </recommendedName>
    <alternativeName>
        <fullName evidence="1">Starch [bacterial glycogen] synthase</fullName>
    </alternativeName>
</protein>
<proteinExistence type="inferred from homology"/>
<evidence type="ECO:0000255" key="1">
    <source>
        <dbReference type="HAMAP-Rule" id="MF_00484"/>
    </source>
</evidence>
<organism>
    <name type="scientific">Citrobacter koseri (strain ATCC BAA-895 / CDC 4225-83 / SGSC4696)</name>
    <dbReference type="NCBI Taxonomy" id="290338"/>
    <lineage>
        <taxon>Bacteria</taxon>
        <taxon>Pseudomonadati</taxon>
        <taxon>Pseudomonadota</taxon>
        <taxon>Gammaproteobacteria</taxon>
        <taxon>Enterobacterales</taxon>
        <taxon>Enterobacteriaceae</taxon>
        <taxon>Citrobacter</taxon>
    </lineage>
</organism>
<feature type="chain" id="PRO_1000014346" description="Glycogen synthase">
    <location>
        <begin position="1"/>
        <end position="477"/>
    </location>
</feature>
<feature type="binding site" evidence="1">
    <location>
        <position position="15"/>
    </location>
    <ligand>
        <name>ADP-alpha-D-glucose</name>
        <dbReference type="ChEBI" id="CHEBI:57498"/>
    </ligand>
</feature>
<reference key="1">
    <citation type="submission" date="2007-08" db="EMBL/GenBank/DDBJ databases">
        <authorList>
            <consortium name="The Citrobacter koseri Genome Sequencing Project"/>
            <person name="McClelland M."/>
            <person name="Sanderson E.K."/>
            <person name="Porwollik S."/>
            <person name="Spieth J."/>
            <person name="Clifton W.S."/>
            <person name="Latreille P."/>
            <person name="Courtney L."/>
            <person name="Wang C."/>
            <person name="Pepin K."/>
            <person name="Bhonagiri V."/>
            <person name="Nash W."/>
            <person name="Johnson M."/>
            <person name="Thiruvilangam P."/>
            <person name="Wilson R."/>
        </authorList>
    </citation>
    <scope>NUCLEOTIDE SEQUENCE [LARGE SCALE GENOMIC DNA]</scope>
    <source>
        <strain>ATCC BAA-895 / CDC 4225-83 / SGSC4696</strain>
    </source>
</reference>
<gene>
    <name evidence="1" type="primary">glgA</name>
    <name type="ordered locus">CKO_04848</name>
</gene>
<comment type="function">
    <text evidence="1">Synthesizes alpha-1,4-glucan chains using ADP-glucose.</text>
</comment>
<comment type="catalytic activity">
    <reaction evidence="1">
        <text>[(1-&gt;4)-alpha-D-glucosyl](n) + ADP-alpha-D-glucose = [(1-&gt;4)-alpha-D-glucosyl](n+1) + ADP + H(+)</text>
        <dbReference type="Rhea" id="RHEA:18189"/>
        <dbReference type="Rhea" id="RHEA-COMP:9584"/>
        <dbReference type="Rhea" id="RHEA-COMP:9587"/>
        <dbReference type="ChEBI" id="CHEBI:15378"/>
        <dbReference type="ChEBI" id="CHEBI:15444"/>
        <dbReference type="ChEBI" id="CHEBI:57498"/>
        <dbReference type="ChEBI" id="CHEBI:456216"/>
        <dbReference type="EC" id="2.4.1.21"/>
    </reaction>
</comment>
<comment type="pathway">
    <text evidence="1">Glycan biosynthesis; glycogen biosynthesis.</text>
</comment>
<comment type="similarity">
    <text evidence="1">Belongs to the glycosyltransferase 1 family. Bacterial/plant glycogen synthase subfamily.</text>
</comment>
<accession>A8AQY0</accession>